<evidence type="ECO:0000255" key="1">
    <source>
        <dbReference type="HAMAP-Rule" id="MF_01590"/>
    </source>
</evidence>
<comment type="function">
    <text evidence="1">Catalyzes carboxymethyl transfer from carboxy-S-adenosyl-L-methionine (Cx-SAM) to 5-hydroxyuridine (ho5U) to form 5-carboxymethoxyuridine (cmo5U) at position 34 in tRNAs.</text>
</comment>
<comment type="catalytic activity">
    <reaction evidence="1">
        <text>carboxy-S-adenosyl-L-methionine + 5-hydroxyuridine(34) in tRNA = 5-carboxymethoxyuridine(34) in tRNA + S-adenosyl-L-homocysteine + H(+)</text>
        <dbReference type="Rhea" id="RHEA:52848"/>
        <dbReference type="Rhea" id="RHEA-COMP:13381"/>
        <dbReference type="Rhea" id="RHEA-COMP:13383"/>
        <dbReference type="ChEBI" id="CHEBI:15378"/>
        <dbReference type="ChEBI" id="CHEBI:57856"/>
        <dbReference type="ChEBI" id="CHEBI:134278"/>
        <dbReference type="ChEBI" id="CHEBI:136877"/>
        <dbReference type="ChEBI" id="CHEBI:136879"/>
    </reaction>
</comment>
<comment type="subunit">
    <text evidence="1">Homotetramer.</text>
</comment>
<comment type="similarity">
    <text evidence="1">Belongs to the class I-like SAM-binding methyltransferase superfamily. CmoB family.</text>
</comment>
<reference key="1">
    <citation type="journal article" date="2005" name="Proc. Natl. Acad. Sci. U.S.A.">
        <title>Complete genome sequence of Vibrio fischeri: a symbiotic bacterium with pathogenic congeners.</title>
        <authorList>
            <person name="Ruby E.G."/>
            <person name="Urbanowski M."/>
            <person name="Campbell J."/>
            <person name="Dunn A."/>
            <person name="Faini M."/>
            <person name="Gunsalus R."/>
            <person name="Lostroh P."/>
            <person name="Lupp C."/>
            <person name="McCann J."/>
            <person name="Millikan D."/>
            <person name="Schaefer A."/>
            <person name="Stabb E."/>
            <person name="Stevens A."/>
            <person name="Visick K."/>
            <person name="Whistler C."/>
            <person name="Greenberg E.P."/>
        </authorList>
    </citation>
    <scope>NUCLEOTIDE SEQUENCE [LARGE SCALE GENOMIC DNA]</scope>
    <source>
        <strain>ATCC 700601 / ES114</strain>
    </source>
</reference>
<gene>
    <name evidence="1" type="primary">cmoB</name>
    <name type="ordered locus">VF_0947</name>
</gene>
<dbReference type="EC" id="2.5.1.-" evidence="1"/>
<dbReference type="EMBL" id="CP000020">
    <property type="protein sequence ID" value="AAW85442.1"/>
    <property type="molecule type" value="Genomic_DNA"/>
</dbReference>
<dbReference type="RefSeq" id="WP_011261593.1">
    <property type="nucleotide sequence ID" value="NC_006840.2"/>
</dbReference>
<dbReference type="RefSeq" id="YP_204330.1">
    <property type="nucleotide sequence ID" value="NC_006840.2"/>
</dbReference>
<dbReference type="SMR" id="Q5E6A4"/>
<dbReference type="STRING" id="312309.VF_0947"/>
<dbReference type="DNASU" id="3277497"/>
<dbReference type="EnsemblBacteria" id="AAW85442">
    <property type="protein sequence ID" value="AAW85442"/>
    <property type="gene ID" value="VF_0947"/>
</dbReference>
<dbReference type="GeneID" id="54163617"/>
<dbReference type="KEGG" id="vfi:VF_0947"/>
<dbReference type="PATRIC" id="fig|312309.11.peg.945"/>
<dbReference type="eggNOG" id="COG0500">
    <property type="taxonomic scope" value="Bacteria"/>
</dbReference>
<dbReference type="HOGENOM" id="CLU_052665_0_0_6"/>
<dbReference type="OrthoDB" id="9773188at2"/>
<dbReference type="Proteomes" id="UP000000537">
    <property type="component" value="Chromosome I"/>
</dbReference>
<dbReference type="GO" id="GO:0016765">
    <property type="term" value="F:transferase activity, transferring alkyl or aryl (other than methyl) groups"/>
    <property type="evidence" value="ECO:0007669"/>
    <property type="project" value="UniProtKB-UniRule"/>
</dbReference>
<dbReference type="GO" id="GO:0002098">
    <property type="term" value="P:tRNA wobble uridine modification"/>
    <property type="evidence" value="ECO:0007669"/>
    <property type="project" value="InterPro"/>
</dbReference>
<dbReference type="CDD" id="cd02440">
    <property type="entry name" value="AdoMet_MTases"/>
    <property type="match status" value="1"/>
</dbReference>
<dbReference type="Gene3D" id="3.40.50.150">
    <property type="entry name" value="Vaccinia Virus protein VP39"/>
    <property type="match status" value="1"/>
</dbReference>
<dbReference type="HAMAP" id="MF_01590">
    <property type="entry name" value="tRNA_carboxymethyltr_CmoB"/>
    <property type="match status" value="1"/>
</dbReference>
<dbReference type="InterPro" id="IPR010017">
    <property type="entry name" value="CmoB"/>
</dbReference>
<dbReference type="InterPro" id="IPR027555">
    <property type="entry name" value="Mo5U34_MeTrfas-like"/>
</dbReference>
<dbReference type="InterPro" id="IPR029063">
    <property type="entry name" value="SAM-dependent_MTases_sf"/>
</dbReference>
<dbReference type="NCBIfam" id="NF011650">
    <property type="entry name" value="PRK15068.1"/>
    <property type="match status" value="1"/>
</dbReference>
<dbReference type="NCBIfam" id="TIGR00452">
    <property type="entry name" value="tRNA 5-methoxyuridine(34)/uridine 5-oxyacetic acid(34) synthase CmoB"/>
    <property type="match status" value="1"/>
</dbReference>
<dbReference type="PANTHER" id="PTHR43861">
    <property type="entry name" value="TRANS-ACONITATE 2-METHYLTRANSFERASE-RELATED"/>
    <property type="match status" value="1"/>
</dbReference>
<dbReference type="Pfam" id="PF08003">
    <property type="entry name" value="Methyltransf_9"/>
    <property type="match status" value="1"/>
</dbReference>
<dbReference type="SUPFAM" id="SSF53335">
    <property type="entry name" value="S-adenosyl-L-methionine-dependent methyltransferases"/>
    <property type="match status" value="1"/>
</dbReference>
<sequence>MFNFANFYQLIAQDTVLQPWLNTLPQQLTDWQNAEHGDIERWIKALKKIPEGCADNIDLKSSVTLSNNTPLIDGERKKLENLLQTFHPWRKGPFTVHDIHIDTEWRSDWKWDRLLPHITPLKNRSVLDVGCGNGYHMWRMLGEDARLCVGIDPSHLFLIQFEAIRKLMGNDQRAHLLPLGIEQLPELNAFDTVFSMGVLYHRRSPLDHLIQLKNQLVAGGELVLETLVIDGDENAVLMPVDRYAQMRNVYFFPSARALKVWLESVGFVDVKIVDECVTTTGEQRSTEWMKHNSLPEYLDPNDSTKTIEGHPAPKRAILIAKKPD</sequence>
<feature type="chain" id="PRO_0000313986" description="tRNA U34 carboxymethyltransferase">
    <location>
        <begin position="1"/>
        <end position="324"/>
    </location>
</feature>
<feature type="binding site" evidence="1">
    <location>
        <position position="91"/>
    </location>
    <ligand>
        <name>carboxy-S-adenosyl-L-methionine</name>
        <dbReference type="ChEBI" id="CHEBI:134278"/>
    </ligand>
</feature>
<feature type="binding site" evidence="1">
    <location>
        <position position="105"/>
    </location>
    <ligand>
        <name>carboxy-S-adenosyl-L-methionine</name>
        <dbReference type="ChEBI" id="CHEBI:134278"/>
    </ligand>
</feature>
<feature type="binding site" evidence="1">
    <location>
        <position position="110"/>
    </location>
    <ligand>
        <name>carboxy-S-adenosyl-L-methionine</name>
        <dbReference type="ChEBI" id="CHEBI:134278"/>
    </ligand>
</feature>
<feature type="binding site" evidence="1">
    <location>
        <position position="130"/>
    </location>
    <ligand>
        <name>carboxy-S-adenosyl-L-methionine</name>
        <dbReference type="ChEBI" id="CHEBI:134278"/>
    </ligand>
</feature>
<feature type="binding site" evidence="1">
    <location>
        <begin position="152"/>
        <end position="154"/>
    </location>
    <ligand>
        <name>carboxy-S-adenosyl-L-methionine</name>
        <dbReference type="ChEBI" id="CHEBI:134278"/>
    </ligand>
</feature>
<feature type="binding site" evidence="1">
    <location>
        <begin position="181"/>
        <end position="182"/>
    </location>
    <ligand>
        <name>carboxy-S-adenosyl-L-methionine</name>
        <dbReference type="ChEBI" id="CHEBI:134278"/>
    </ligand>
</feature>
<feature type="binding site" evidence="1">
    <location>
        <position position="196"/>
    </location>
    <ligand>
        <name>carboxy-S-adenosyl-L-methionine</name>
        <dbReference type="ChEBI" id="CHEBI:134278"/>
    </ligand>
</feature>
<feature type="binding site" evidence="1">
    <location>
        <position position="200"/>
    </location>
    <ligand>
        <name>carboxy-S-adenosyl-L-methionine</name>
        <dbReference type="ChEBI" id="CHEBI:134278"/>
    </ligand>
</feature>
<feature type="binding site" evidence="1">
    <location>
        <position position="315"/>
    </location>
    <ligand>
        <name>carboxy-S-adenosyl-L-methionine</name>
        <dbReference type="ChEBI" id="CHEBI:134278"/>
    </ligand>
</feature>
<name>CMOB_ALIF1</name>
<protein>
    <recommendedName>
        <fullName evidence="1">tRNA U34 carboxymethyltransferase</fullName>
        <ecNumber evidence="1">2.5.1.-</ecNumber>
    </recommendedName>
</protein>
<proteinExistence type="inferred from homology"/>
<keyword id="KW-1185">Reference proteome</keyword>
<keyword id="KW-0808">Transferase</keyword>
<keyword id="KW-0819">tRNA processing</keyword>
<accession>Q5E6A4</accession>
<organism>
    <name type="scientific">Aliivibrio fischeri (strain ATCC 700601 / ES114)</name>
    <name type="common">Vibrio fischeri</name>
    <dbReference type="NCBI Taxonomy" id="312309"/>
    <lineage>
        <taxon>Bacteria</taxon>
        <taxon>Pseudomonadati</taxon>
        <taxon>Pseudomonadota</taxon>
        <taxon>Gammaproteobacteria</taxon>
        <taxon>Vibrionales</taxon>
        <taxon>Vibrionaceae</taxon>
        <taxon>Aliivibrio</taxon>
    </lineage>
</organism>